<gene>
    <name type="ordered locus">Rv3134c</name>
</gene>
<reference key="1">
    <citation type="journal article" date="1998" name="Nature">
        <title>Deciphering the biology of Mycobacterium tuberculosis from the complete genome sequence.</title>
        <authorList>
            <person name="Cole S.T."/>
            <person name="Brosch R."/>
            <person name="Parkhill J."/>
            <person name="Garnier T."/>
            <person name="Churcher C.M."/>
            <person name="Harris D.E."/>
            <person name="Gordon S.V."/>
            <person name="Eiglmeier K."/>
            <person name="Gas S."/>
            <person name="Barry C.E. III"/>
            <person name="Tekaia F."/>
            <person name="Badcock K."/>
            <person name="Basham D."/>
            <person name="Brown D."/>
            <person name="Chillingworth T."/>
            <person name="Connor R."/>
            <person name="Davies R.M."/>
            <person name="Devlin K."/>
            <person name="Feltwell T."/>
            <person name="Gentles S."/>
            <person name="Hamlin N."/>
            <person name="Holroyd S."/>
            <person name="Hornsby T."/>
            <person name="Jagels K."/>
            <person name="Krogh A."/>
            <person name="McLean J."/>
            <person name="Moule S."/>
            <person name="Murphy L.D."/>
            <person name="Oliver S."/>
            <person name="Osborne J."/>
            <person name="Quail M.A."/>
            <person name="Rajandream M.A."/>
            <person name="Rogers J."/>
            <person name="Rutter S."/>
            <person name="Seeger K."/>
            <person name="Skelton S."/>
            <person name="Squares S."/>
            <person name="Squares R."/>
            <person name="Sulston J.E."/>
            <person name="Taylor K."/>
            <person name="Whitehead S."/>
            <person name="Barrell B.G."/>
        </authorList>
    </citation>
    <scope>NUCLEOTIDE SEQUENCE [LARGE SCALE GENOMIC DNA]</scope>
    <source>
        <strain>ATCC 25618 / H37Rv</strain>
    </source>
</reference>
<reference key="2">
    <citation type="journal article" date="2000" name="Tuber. Lung Dis.">
        <title>Characterization of a two-component system, devR-devS, of Mycobacterium tuberculosis.</title>
        <authorList>
            <person name="Dasgupta N."/>
            <person name="Kapur V."/>
            <person name="Singh K.K."/>
            <person name="Das T.K."/>
            <person name="Sachdeva S."/>
            <person name="Jyothisri K."/>
            <person name="Tyagi J.S."/>
        </authorList>
    </citation>
    <scope>OPERON STRUCTURE</scope>
    <source>
        <strain>ATCC 25618 / H37Rv</strain>
    </source>
</reference>
<reference key="3">
    <citation type="journal article" date="2001" name="Proc. Natl. Acad. Sci. U.S.A.">
        <title>Regulation of the Mycobacterium tuberculosis hypoxic response gene encoding alpha -crystallin.</title>
        <authorList>
            <person name="Sherman D.R."/>
            <person name="Voskuil M."/>
            <person name="Schnappinger D."/>
            <person name="Liao R."/>
            <person name="Harrell M.I."/>
            <person name="Schoolnik G.K."/>
        </authorList>
    </citation>
    <scope>INDUCTION BY HYPOXIA</scope>
    <scope>DISRUPTION PHENOTYPE</scope>
    <source>
        <strain>ATCC 25618 / H37Rv</strain>
    </source>
</reference>
<reference key="4">
    <citation type="journal article" date="2003" name="J. Exp. Med.">
        <title>Inhibition of respiration by nitric oxide induces a Mycobacterium tuberculosis dormancy program.</title>
        <authorList>
            <person name="Voskuil M.I."/>
            <person name="Schnappinger D."/>
            <person name="Visconti K.C."/>
            <person name="Harrell M.I."/>
            <person name="Dolganov G.M."/>
            <person name="Sherman D.R."/>
            <person name="Schoolnik G.K."/>
        </authorList>
    </citation>
    <scope>INDUCTION BY NITRIC OXIDE (NO) AND BY HYPOXIA</scope>
    <scope>DORMANCY REGULON</scope>
    <scope>DISRUPTION PHENOTYPE</scope>
    <source>
        <strain>ATCC 25618 / H37Rv</strain>
    </source>
</reference>
<reference key="5">
    <citation type="journal article" date="2008" name="Cell Host Microbe">
        <title>Mycobacterium tuberculosis senses host-derived carbon monoxide during macrophage infection.</title>
        <authorList>
            <person name="Shiloh M.U."/>
            <person name="Manzanillo P."/>
            <person name="Cox J.S."/>
        </authorList>
    </citation>
    <scope>INDUCTION BY CARBON MONOXIDE (CO)</scope>
    <source>
        <strain>ATCC 35801 / TMC 107 / Erdman</strain>
    </source>
</reference>
<reference key="6">
    <citation type="journal article" date="2008" name="J. Biol. Chem.">
        <title>Heme oxygenase-1-derived carbon monoxide induces the Mycobacterium tuberculosis dormancy regulon.</title>
        <authorList>
            <person name="Kumar A."/>
            <person name="Deshane J.S."/>
            <person name="Crossman D.K."/>
            <person name="Bolisetty S."/>
            <person name="Yan B.S."/>
            <person name="Kramnik I."/>
            <person name="Agarwal A."/>
            <person name="Steyn A.J."/>
        </authorList>
    </citation>
    <scope>INDUCTION BY CARBON MONOXIDE (CO)</scope>
    <scope>DORMANCY REGULON</scope>
    <source>
        <strain>ATCC 25618 / H37Rv</strain>
    </source>
</reference>
<reference key="7">
    <citation type="journal article" date="2011" name="Mol. Cell. Proteomics">
        <title>Proteogenomic analysis of Mycobacterium tuberculosis by high resolution mass spectrometry.</title>
        <authorList>
            <person name="Kelkar D.S."/>
            <person name="Kumar D."/>
            <person name="Kumar P."/>
            <person name="Balakrishnan L."/>
            <person name="Muthusamy B."/>
            <person name="Yadav A.K."/>
            <person name="Shrivastava P."/>
            <person name="Marimuthu A."/>
            <person name="Anand S."/>
            <person name="Sundaram H."/>
            <person name="Kingsbury R."/>
            <person name="Harsha H.C."/>
            <person name="Nair B."/>
            <person name="Prasad T.S."/>
            <person name="Chauhan D.S."/>
            <person name="Katoch K."/>
            <person name="Katoch V.M."/>
            <person name="Kumar P."/>
            <person name="Chaerkady R."/>
            <person name="Ramachandran S."/>
            <person name="Dash D."/>
            <person name="Pandey A."/>
        </authorList>
    </citation>
    <scope>IDENTIFICATION BY MASS SPECTROMETRY [LARGE SCALE ANALYSIS]</scope>
    <source>
        <strain>ATCC 25618 / H37Rv</strain>
    </source>
</reference>
<organism>
    <name type="scientific">Mycobacterium tuberculosis (strain ATCC 25618 / H37Rv)</name>
    <dbReference type="NCBI Taxonomy" id="83332"/>
    <lineage>
        <taxon>Bacteria</taxon>
        <taxon>Bacillati</taxon>
        <taxon>Actinomycetota</taxon>
        <taxon>Actinomycetes</taxon>
        <taxon>Mycobacteriales</taxon>
        <taxon>Mycobacteriaceae</taxon>
        <taxon>Mycobacterium</taxon>
        <taxon>Mycobacterium tuberculosis complex</taxon>
    </lineage>
</organism>
<evidence type="ECO:0000250" key="1">
    <source>
        <dbReference type="UniProtKB" id="P9WFD7"/>
    </source>
</evidence>
<evidence type="ECO:0000269" key="2">
    <source>
    </source>
</evidence>
<evidence type="ECO:0000269" key="3">
    <source>
    </source>
</evidence>
<evidence type="ECO:0000269" key="4">
    <source>
    </source>
</evidence>
<evidence type="ECO:0000269" key="5">
    <source>
    </source>
</evidence>
<evidence type="ECO:0000305" key="6"/>
<comment type="induction">
    <text evidence="2 3 4 5">A member of the dormancy regulon. Induced in response to reduced oxygen tension (hypoxia), low levels of nitric oxide (NO) and carbon monoxide (CO). It is hoped that this regulon will give insight into the latent, or dormant phase of infection. Member of the Rv3134c-devR-devS operon.</text>
</comment>
<comment type="disruption phenotype">
    <text evidence="2 3">A strain lacking this gene does not induce most genes of the dormancy regulon, due to polar effects on the downstream devR (dosR) gene (PubMed:11416222). Restoration of induction only occurs when both this gene and devR (dosR) are transformed into the deleted strain.</text>
</comment>
<comment type="similarity">
    <text evidence="6">Belongs to the universal stress protein A family.</text>
</comment>
<protein>
    <recommendedName>
        <fullName>Universal stress protein Rv3134c</fullName>
        <shortName>USP Rv3134c</shortName>
    </recommendedName>
</protein>
<accession>P9WFD3</accession>
<accession>L0TEM6</accession>
<accession>P95192</accession>
<accession>Q7D624</accession>
<dbReference type="EMBL" id="AL123456">
    <property type="protein sequence ID" value="CCP45944.1"/>
    <property type="molecule type" value="Genomic_DNA"/>
</dbReference>
<dbReference type="PIR" id="G70645">
    <property type="entry name" value="G70645"/>
</dbReference>
<dbReference type="RefSeq" id="NP_217650.1">
    <property type="nucleotide sequence ID" value="NC_000962.3"/>
</dbReference>
<dbReference type="RefSeq" id="WP_003416373.1">
    <property type="nucleotide sequence ID" value="NZ_NVQJ01000019.1"/>
</dbReference>
<dbReference type="SMR" id="P9WFD3"/>
<dbReference type="FunCoup" id="P9WFD3">
    <property type="interactions" value="6"/>
</dbReference>
<dbReference type="STRING" id="83332.Rv3134c"/>
<dbReference type="PaxDb" id="83332-Rv3134c"/>
<dbReference type="DNASU" id="887558"/>
<dbReference type="GeneID" id="887558"/>
<dbReference type="KEGG" id="mtu:Rv3134c"/>
<dbReference type="KEGG" id="mtv:RVBD_3134c"/>
<dbReference type="TubercuList" id="Rv3134c"/>
<dbReference type="eggNOG" id="COG0589">
    <property type="taxonomic scope" value="Bacteria"/>
</dbReference>
<dbReference type="InParanoid" id="P9WFD3"/>
<dbReference type="OrthoDB" id="3174546at2"/>
<dbReference type="PhylomeDB" id="P9WFD3"/>
<dbReference type="Proteomes" id="UP000001584">
    <property type="component" value="Chromosome"/>
</dbReference>
<dbReference type="GO" id="GO:0009274">
    <property type="term" value="C:peptidoglycan-based cell wall"/>
    <property type="evidence" value="ECO:0007005"/>
    <property type="project" value="MTBBASE"/>
</dbReference>
<dbReference type="GO" id="GO:0005886">
    <property type="term" value="C:plasma membrane"/>
    <property type="evidence" value="ECO:0007005"/>
    <property type="project" value="MTBBASE"/>
</dbReference>
<dbReference type="GO" id="GO:0005524">
    <property type="term" value="F:ATP binding"/>
    <property type="evidence" value="ECO:0007669"/>
    <property type="project" value="UniProtKB-KW"/>
</dbReference>
<dbReference type="GO" id="GO:0001666">
    <property type="term" value="P:response to hypoxia"/>
    <property type="evidence" value="ECO:0000270"/>
    <property type="project" value="UniProtKB"/>
</dbReference>
<dbReference type="GO" id="GO:0006950">
    <property type="term" value="P:response to stress"/>
    <property type="evidence" value="ECO:0000318"/>
    <property type="project" value="GO_Central"/>
</dbReference>
<dbReference type="Gene3D" id="3.40.50.620">
    <property type="entry name" value="HUPs"/>
    <property type="match status" value="2"/>
</dbReference>
<dbReference type="InterPro" id="IPR014729">
    <property type="entry name" value="Rossmann-like_a/b/a_fold"/>
</dbReference>
<dbReference type="InterPro" id="IPR006015">
    <property type="entry name" value="Universal_stress_UspA"/>
</dbReference>
<dbReference type="InterPro" id="IPR006016">
    <property type="entry name" value="UspA"/>
</dbReference>
<dbReference type="PANTHER" id="PTHR46268">
    <property type="entry name" value="STRESS RESPONSE PROTEIN NHAX"/>
    <property type="match status" value="1"/>
</dbReference>
<dbReference type="PANTHER" id="PTHR46268:SF6">
    <property type="entry name" value="UNIVERSAL STRESS PROTEIN UP12"/>
    <property type="match status" value="1"/>
</dbReference>
<dbReference type="Pfam" id="PF00582">
    <property type="entry name" value="Usp"/>
    <property type="match status" value="1"/>
</dbReference>
<dbReference type="PRINTS" id="PR01438">
    <property type="entry name" value="UNVRSLSTRESS"/>
</dbReference>
<dbReference type="SUPFAM" id="SSF52402">
    <property type="entry name" value="Adenine nucleotide alpha hydrolases-like"/>
    <property type="match status" value="1"/>
</dbReference>
<feature type="chain" id="PRO_0000392630" description="Universal stress protein Rv3134c">
    <location>
        <begin position="1"/>
        <end position="268"/>
    </location>
</feature>
<feature type="binding site" evidence="1">
    <location>
        <position position="13"/>
    </location>
    <ligand>
        <name>ATP</name>
        <dbReference type="ChEBI" id="CHEBI:30616"/>
    </ligand>
</feature>
<feature type="binding site" evidence="1">
    <location>
        <begin position="107"/>
        <end position="113"/>
    </location>
    <ligand>
        <name>ATP</name>
        <dbReference type="ChEBI" id="CHEBI:30616"/>
    </ligand>
</feature>
<feature type="binding site" evidence="1">
    <location>
        <position position="117"/>
    </location>
    <ligand>
        <name>ATP</name>
        <dbReference type="ChEBI" id="CHEBI:30616"/>
    </ligand>
</feature>
<feature type="binding site" evidence="1">
    <location>
        <begin position="120"/>
        <end position="121"/>
    </location>
    <ligand>
        <name>ATP</name>
        <dbReference type="ChEBI" id="CHEBI:30616"/>
    </ligand>
</feature>
<keyword id="KW-0067">ATP-binding</keyword>
<keyword id="KW-0547">Nucleotide-binding</keyword>
<keyword id="KW-1185">Reference proteome</keyword>
<sequence length="268" mass="28008">MSDPRPARAVVVGIDGSRAATHAALWAVDEAVNRDIPLRLVYVIDPSQLSAAGEGGGQSAARAALHDASRKVEATGQPVKIETEVLCGRPLTKLMQESRSAAMLCVGSVGLDHVRGRRGSVAATLAGSALCPVAVIHPSPAEPATTSQVSAVVAEVDNGVVLRHAFEEARLRGVPLRAVAVHAAETPDDVEQGSRLAHVHLSRRLAHWTRLYPEVRVDRAIAGGSACRHLAANAKPGQLFVADSHSAHELCGAYQPGCAVLTVRSANL</sequence>
<proteinExistence type="evidence at protein level"/>
<name>Y3134_MYCTU</name>